<feature type="chain" id="PRO_1000195359" description="Recombination protein RecR">
    <location>
        <begin position="1"/>
        <end position="198"/>
    </location>
</feature>
<feature type="domain" description="Toprim" evidence="1">
    <location>
        <begin position="80"/>
        <end position="175"/>
    </location>
</feature>
<feature type="zinc finger region" description="C4-type" evidence="1">
    <location>
        <begin position="57"/>
        <end position="72"/>
    </location>
</feature>
<protein>
    <recommendedName>
        <fullName evidence="1">Recombination protein RecR</fullName>
    </recommendedName>
</protein>
<dbReference type="EMBL" id="CP000922">
    <property type="protein sequence ID" value="ACJ32403.1"/>
    <property type="molecule type" value="Genomic_DNA"/>
</dbReference>
<dbReference type="RefSeq" id="WP_004888493.1">
    <property type="nucleotide sequence ID" value="NC_011567.1"/>
</dbReference>
<dbReference type="SMR" id="B7GFF3"/>
<dbReference type="STRING" id="491915.Aflv_0019"/>
<dbReference type="GeneID" id="7036208"/>
<dbReference type="KEGG" id="afl:Aflv_0019"/>
<dbReference type="eggNOG" id="COG0353">
    <property type="taxonomic scope" value="Bacteria"/>
</dbReference>
<dbReference type="HOGENOM" id="CLU_060739_1_0_9"/>
<dbReference type="Proteomes" id="UP000000742">
    <property type="component" value="Chromosome"/>
</dbReference>
<dbReference type="GO" id="GO:0003677">
    <property type="term" value="F:DNA binding"/>
    <property type="evidence" value="ECO:0007669"/>
    <property type="project" value="UniProtKB-UniRule"/>
</dbReference>
<dbReference type="GO" id="GO:0008270">
    <property type="term" value="F:zinc ion binding"/>
    <property type="evidence" value="ECO:0007669"/>
    <property type="project" value="UniProtKB-KW"/>
</dbReference>
<dbReference type="GO" id="GO:0006310">
    <property type="term" value="P:DNA recombination"/>
    <property type="evidence" value="ECO:0007669"/>
    <property type="project" value="UniProtKB-UniRule"/>
</dbReference>
<dbReference type="GO" id="GO:0006281">
    <property type="term" value="P:DNA repair"/>
    <property type="evidence" value="ECO:0007669"/>
    <property type="project" value="UniProtKB-UniRule"/>
</dbReference>
<dbReference type="CDD" id="cd01025">
    <property type="entry name" value="TOPRIM_recR"/>
    <property type="match status" value="1"/>
</dbReference>
<dbReference type="Gene3D" id="3.30.60.80">
    <property type="match status" value="1"/>
</dbReference>
<dbReference type="Gene3D" id="3.40.1360.10">
    <property type="match status" value="1"/>
</dbReference>
<dbReference type="Gene3D" id="6.10.250.240">
    <property type="match status" value="1"/>
</dbReference>
<dbReference type="Gene3D" id="1.10.8.420">
    <property type="entry name" value="RecR Domain 1"/>
    <property type="match status" value="1"/>
</dbReference>
<dbReference type="HAMAP" id="MF_00017">
    <property type="entry name" value="RecR"/>
    <property type="match status" value="1"/>
</dbReference>
<dbReference type="InterPro" id="IPR000093">
    <property type="entry name" value="DNA_Rcmb_RecR"/>
</dbReference>
<dbReference type="InterPro" id="IPR023627">
    <property type="entry name" value="Rcmb_RecR"/>
</dbReference>
<dbReference type="InterPro" id="IPR015967">
    <property type="entry name" value="Rcmb_RecR_Znf"/>
</dbReference>
<dbReference type="InterPro" id="IPR006171">
    <property type="entry name" value="TOPRIM_dom"/>
</dbReference>
<dbReference type="InterPro" id="IPR034137">
    <property type="entry name" value="TOPRIM_RecR"/>
</dbReference>
<dbReference type="NCBIfam" id="TIGR00615">
    <property type="entry name" value="recR"/>
    <property type="match status" value="1"/>
</dbReference>
<dbReference type="PANTHER" id="PTHR30446">
    <property type="entry name" value="RECOMBINATION PROTEIN RECR"/>
    <property type="match status" value="1"/>
</dbReference>
<dbReference type="PANTHER" id="PTHR30446:SF0">
    <property type="entry name" value="RECOMBINATION PROTEIN RECR"/>
    <property type="match status" value="1"/>
</dbReference>
<dbReference type="Pfam" id="PF21175">
    <property type="entry name" value="RecR_C"/>
    <property type="match status" value="1"/>
</dbReference>
<dbReference type="Pfam" id="PF21176">
    <property type="entry name" value="RecR_HhH"/>
    <property type="match status" value="1"/>
</dbReference>
<dbReference type="Pfam" id="PF02132">
    <property type="entry name" value="RecR_ZnF"/>
    <property type="match status" value="1"/>
</dbReference>
<dbReference type="Pfam" id="PF13662">
    <property type="entry name" value="Toprim_4"/>
    <property type="match status" value="1"/>
</dbReference>
<dbReference type="SMART" id="SM00493">
    <property type="entry name" value="TOPRIM"/>
    <property type="match status" value="1"/>
</dbReference>
<dbReference type="SUPFAM" id="SSF111304">
    <property type="entry name" value="Recombination protein RecR"/>
    <property type="match status" value="1"/>
</dbReference>
<dbReference type="PROSITE" id="PS01300">
    <property type="entry name" value="RECR"/>
    <property type="match status" value="1"/>
</dbReference>
<dbReference type="PROSITE" id="PS50880">
    <property type="entry name" value="TOPRIM"/>
    <property type="match status" value="1"/>
</dbReference>
<reference key="1">
    <citation type="journal article" date="2008" name="Genome Biol.">
        <title>Encapsulated in silica: genome, proteome and physiology of the thermophilic bacterium Anoxybacillus flavithermus WK1.</title>
        <authorList>
            <person name="Saw J.H."/>
            <person name="Mountain B.W."/>
            <person name="Feng L."/>
            <person name="Omelchenko M.V."/>
            <person name="Hou S."/>
            <person name="Saito J.A."/>
            <person name="Stott M.B."/>
            <person name="Li D."/>
            <person name="Zhao G."/>
            <person name="Wu J."/>
            <person name="Galperin M.Y."/>
            <person name="Koonin E.V."/>
            <person name="Makarova K.S."/>
            <person name="Wolf Y.I."/>
            <person name="Rigden D.J."/>
            <person name="Dunfield P.F."/>
            <person name="Wang L."/>
            <person name="Alam M."/>
        </authorList>
    </citation>
    <scope>NUCLEOTIDE SEQUENCE [LARGE SCALE GENOMIC DNA]</scope>
    <source>
        <strain>DSM 21510 / WK1</strain>
    </source>
</reference>
<sequence length="198" mass="22112">MYYPEPISKLIDSFMKLPGIGPKTAVRLAFFVLNMKEDVVLDFAKALVNAKRNLTYCSSCGHITDKDPCYICEDDKRDRSIICVVQDPKDVIAMEKMKEYNGLYHVLHGAISPMEGIGPEDIKIAELLRRLQDETVQEVILATNPNIEGEATAMYISRLLKPTGVKITRIAHGLPVGGDLEYADEVTLSKALEGRREL</sequence>
<accession>B7GFF3</accession>
<proteinExistence type="inferred from homology"/>
<comment type="function">
    <text evidence="1">May play a role in DNA repair. It seems to be involved in an RecBC-independent recombinational process of DNA repair. It may act with RecF and RecO.</text>
</comment>
<comment type="similarity">
    <text evidence="1">Belongs to the RecR family.</text>
</comment>
<gene>
    <name evidence="1" type="primary">recR</name>
    <name type="ordered locus">Aflv_0019</name>
</gene>
<keyword id="KW-0227">DNA damage</keyword>
<keyword id="KW-0233">DNA recombination</keyword>
<keyword id="KW-0234">DNA repair</keyword>
<keyword id="KW-0479">Metal-binding</keyword>
<keyword id="KW-0862">Zinc</keyword>
<keyword id="KW-0863">Zinc-finger</keyword>
<name>RECR_ANOFW</name>
<evidence type="ECO:0000255" key="1">
    <source>
        <dbReference type="HAMAP-Rule" id="MF_00017"/>
    </source>
</evidence>
<organism>
    <name type="scientific">Anoxybacillus flavithermus (strain DSM 21510 / WK1)</name>
    <dbReference type="NCBI Taxonomy" id="491915"/>
    <lineage>
        <taxon>Bacteria</taxon>
        <taxon>Bacillati</taxon>
        <taxon>Bacillota</taxon>
        <taxon>Bacilli</taxon>
        <taxon>Bacillales</taxon>
        <taxon>Anoxybacillaceae</taxon>
        <taxon>Anoxybacillus</taxon>
    </lineage>
</organism>